<protein>
    <recommendedName>
        <fullName evidence="1">Recombination protein RecR</fullName>
    </recommendedName>
</protein>
<comment type="function">
    <text evidence="1">May play a role in DNA repair. It seems to be involved in an RecBC-independent recombinational process of DNA repair. It may act with RecF and RecO.</text>
</comment>
<comment type="similarity">
    <text evidence="1">Belongs to the RecR family.</text>
</comment>
<proteinExistence type="inferred from homology"/>
<evidence type="ECO:0000255" key="1">
    <source>
        <dbReference type="HAMAP-Rule" id="MF_00017"/>
    </source>
</evidence>
<sequence>MQYPRPIAKLIEGFTRLPGIGPKTASRLAFHVLDMKEDDVLEFAKALVHAKRDLTYCSQCHNITDTDPCQICEDKHRDRTTICVVQESRDLIAMEKMREYTGLYHVLHGAISPMDGIGPEDIKIAELIKRLQDDESVKEVIVATNPTIEGEATAMYISRLIKPTGIKVTRLAHGLPVGGDLEYADEVTLSKAIEGRREL</sequence>
<reference key="1">
    <citation type="submission" date="2003-10" db="EMBL/GenBank/DDBJ databases">
        <title>The complete genome sequence of the alkaliphilic Bacillus clausii KSM-K16.</title>
        <authorList>
            <person name="Takaki Y."/>
            <person name="Kageyama Y."/>
            <person name="Shimamura S."/>
            <person name="Suzuki H."/>
            <person name="Nishi S."/>
            <person name="Hatada Y."/>
            <person name="Kawai S."/>
            <person name="Ito S."/>
            <person name="Horikoshi K."/>
        </authorList>
    </citation>
    <scope>NUCLEOTIDE SEQUENCE [LARGE SCALE GENOMIC DNA]</scope>
    <source>
        <strain>KSM-K16</strain>
    </source>
</reference>
<name>RECR_SHOC1</name>
<organism>
    <name type="scientific">Shouchella clausii (strain KSM-K16)</name>
    <name type="common">Alkalihalobacillus clausii</name>
    <dbReference type="NCBI Taxonomy" id="66692"/>
    <lineage>
        <taxon>Bacteria</taxon>
        <taxon>Bacillati</taxon>
        <taxon>Bacillota</taxon>
        <taxon>Bacilli</taxon>
        <taxon>Bacillales</taxon>
        <taxon>Bacillaceae</taxon>
        <taxon>Shouchella</taxon>
    </lineage>
</organism>
<accession>Q5WLZ3</accession>
<feature type="chain" id="PRO_0000190282" description="Recombination protein RecR">
    <location>
        <begin position="1"/>
        <end position="199"/>
    </location>
</feature>
<feature type="domain" description="Toprim" evidence="1">
    <location>
        <begin position="80"/>
        <end position="176"/>
    </location>
</feature>
<feature type="zinc finger region" description="C4-type" evidence="1">
    <location>
        <begin position="57"/>
        <end position="72"/>
    </location>
</feature>
<dbReference type="EMBL" id="AP006627">
    <property type="protein sequence ID" value="BAD62582.1"/>
    <property type="molecule type" value="Genomic_DNA"/>
</dbReference>
<dbReference type="RefSeq" id="WP_011244903.1">
    <property type="nucleotide sequence ID" value="NC_006582.1"/>
</dbReference>
<dbReference type="SMR" id="Q5WLZ3"/>
<dbReference type="STRING" id="66692.ABC0039"/>
<dbReference type="GeneID" id="86928506"/>
<dbReference type="KEGG" id="bcl:ABC0039"/>
<dbReference type="eggNOG" id="COG0353">
    <property type="taxonomic scope" value="Bacteria"/>
</dbReference>
<dbReference type="HOGENOM" id="CLU_060739_1_0_9"/>
<dbReference type="OrthoDB" id="9802672at2"/>
<dbReference type="Proteomes" id="UP000001168">
    <property type="component" value="Chromosome"/>
</dbReference>
<dbReference type="GO" id="GO:0003677">
    <property type="term" value="F:DNA binding"/>
    <property type="evidence" value="ECO:0007669"/>
    <property type="project" value="UniProtKB-UniRule"/>
</dbReference>
<dbReference type="GO" id="GO:0008270">
    <property type="term" value="F:zinc ion binding"/>
    <property type="evidence" value="ECO:0007669"/>
    <property type="project" value="UniProtKB-KW"/>
</dbReference>
<dbReference type="GO" id="GO:0006310">
    <property type="term" value="P:DNA recombination"/>
    <property type="evidence" value="ECO:0007669"/>
    <property type="project" value="UniProtKB-UniRule"/>
</dbReference>
<dbReference type="GO" id="GO:0006281">
    <property type="term" value="P:DNA repair"/>
    <property type="evidence" value="ECO:0007669"/>
    <property type="project" value="UniProtKB-UniRule"/>
</dbReference>
<dbReference type="CDD" id="cd01025">
    <property type="entry name" value="TOPRIM_recR"/>
    <property type="match status" value="1"/>
</dbReference>
<dbReference type="Gene3D" id="3.30.60.80">
    <property type="match status" value="1"/>
</dbReference>
<dbReference type="Gene3D" id="3.40.1360.10">
    <property type="match status" value="1"/>
</dbReference>
<dbReference type="Gene3D" id="6.10.250.240">
    <property type="match status" value="1"/>
</dbReference>
<dbReference type="Gene3D" id="1.10.8.420">
    <property type="entry name" value="RecR Domain 1"/>
    <property type="match status" value="1"/>
</dbReference>
<dbReference type="HAMAP" id="MF_00017">
    <property type="entry name" value="RecR"/>
    <property type="match status" value="1"/>
</dbReference>
<dbReference type="InterPro" id="IPR000093">
    <property type="entry name" value="DNA_Rcmb_RecR"/>
</dbReference>
<dbReference type="InterPro" id="IPR023627">
    <property type="entry name" value="Rcmb_RecR"/>
</dbReference>
<dbReference type="InterPro" id="IPR015967">
    <property type="entry name" value="Rcmb_RecR_Znf"/>
</dbReference>
<dbReference type="InterPro" id="IPR006171">
    <property type="entry name" value="TOPRIM_dom"/>
</dbReference>
<dbReference type="InterPro" id="IPR034137">
    <property type="entry name" value="TOPRIM_RecR"/>
</dbReference>
<dbReference type="NCBIfam" id="TIGR00615">
    <property type="entry name" value="recR"/>
    <property type="match status" value="1"/>
</dbReference>
<dbReference type="PANTHER" id="PTHR30446">
    <property type="entry name" value="RECOMBINATION PROTEIN RECR"/>
    <property type="match status" value="1"/>
</dbReference>
<dbReference type="PANTHER" id="PTHR30446:SF0">
    <property type="entry name" value="RECOMBINATION PROTEIN RECR"/>
    <property type="match status" value="1"/>
</dbReference>
<dbReference type="Pfam" id="PF21175">
    <property type="entry name" value="RecR_C"/>
    <property type="match status" value="1"/>
</dbReference>
<dbReference type="Pfam" id="PF21176">
    <property type="entry name" value="RecR_HhH"/>
    <property type="match status" value="1"/>
</dbReference>
<dbReference type="Pfam" id="PF02132">
    <property type="entry name" value="RecR_ZnF"/>
    <property type="match status" value="1"/>
</dbReference>
<dbReference type="Pfam" id="PF13662">
    <property type="entry name" value="Toprim_4"/>
    <property type="match status" value="1"/>
</dbReference>
<dbReference type="SMART" id="SM00493">
    <property type="entry name" value="TOPRIM"/>
    <property type="match status" value="1"/>
</dbReference>
<dbReference type="SUPFAM" id="SSF111304">
    <property type="entry name" value="Recombination protein RecR"/>
    <property type="match status" value="1"/>
</dbReference>
<dbReference type="PROSITE" id="PS01300">
    <property type="entry name" value="RECR"/>
    <property type="match status" value="1"/>
</dbReference>
<dbReference type="PROSITE" id="PS50880">
    <property type="entry name" value="TOPRIM"/>
    <property type="match status" value="1"/>
</dbReference>
<keyword id="KW-0227">DNA damage</keyword>
<keyword id="KW-0233">DNA recombination</keyword>
<keyword id="KW-0234">DNA repair</keyword>
<keyword id="KW-0479">Metal-binding</keyword>
<keyword id="KW-1185">Reference proteome</keyword>
<keyword id="KW-0862">Zinc</keyword>
<keyword id="KW-0863">Zinc-finger</keyword>
<gene>
    <name evidence="1" type="primary">recR</name>
    <name type="ordered locus">ABC0039</name>
</gene>